<accession>Q2JV13</accession>
<keyword id="KW-0030">Aminoacyl-tRNA synthetase</keyword>
<keyword id="KW-0067">ATP-binding</keyword>
<keyword id="KW-0963">Cytoplasm</keyword>
<keyword id="KW-0436">Ligase</keyword>
<keyword id="KW-0547">Nucleotide-binding</keyword>
<keyword id="KW-0648">Protein biosynthesis</keyword>
<feature type="chain" id="PRO_1000009455" description="Leucine--tRNA ligase">
    <location>
        <begin position="1"/>
        <end position="873"/>
    </location>
</feature>
<feature type="short sequence motif" description="'HIGH' region">
    <location>
        <begin position="43"/>
        <end position="53"/>
    </location>
</feature>
<feature type="short sequence motif" description="'KMSKS' region">
    <location>
        <begin position="624"/>
        <end position="628"/>
    </location>
</feature>
<feature type="binding site" evidence="1">
    <location>
        <position position="627"/>
    </location>
    <ligand>
        <name>ATP</name>
        <dbReference type="ChEBI" id="CHEBI:30616"/>
    </ligand>
</feature>
<comment type="catalytic activity">
    <reaction evidence="1">
        <text>tRNA(Leu) + L-leucine + ATP = L-leucyl-tRNA(Leu) + AMP + diphosphate</text>
        <dbReference type="Rhea" id="RHEA:11688"/>
        <dbReference type="Rhea" id="RHEA-COMP:9613"/>
        <dbReference type="Rhea" id="RHEA-COMP:9622"/>
        <dbReference type="ChEBI" id="CHEBI:30616"/>
        <dbReference type="ChEBI" id="CHEBI:33019"/>
        <dbReference type="ChEBI" id="CHEBI:57427"/>
        <dbReference type="ChEBI" id="CHEBI:78442"/>
        <dbReference type="ChEBI" id="CHEBI:78494"/>
        <dbReference type="ChEBI" id="CHEBI:456215"/>
        <dbReference type="EC" id="6.1.1.4"/>
    </reaction>
</comment>
<comment type="subcellular location">
    <subcellularLocation>
        <location evidence="1">Cytoplasm</location>
    </subcellularLocation>
</comment>
<comment type="similarity">
    <text evidence="1">Belongs to the class-I aminoacyl-tRNA synthetase family.</text>
</comment>
<protein>
    <recommendedName>
        <fullName evidence="1">Leucine--tRNA ligase</fullName>
        <ecNumber evidence="1">6.1.1.4</ecNumber>
    </recommendedName>
    <alternativeName>
        <fullName evidence="1">Leucyl-tRNA synthetase</fullName>
        <shortName evidence="1">LeuRS</shortName>
    </alternativeName>
</protein>
<sequence>MDARYNPPAIESKWQAHWRELGLDRTPELTAESRKFYALSMFPYPSGSLHMGHVRNYTITDVIARHKRMQGYAVLHPMGWDAFGLPAENAAIDRGIPPAKWTYQNIAQMRDQLQRLGLSYDWEREITTCAPDYYKWTQWLFLQFFKAGLAYQKEAPVNWDPVDQTVLANEQVDAEGRSWRSGALVEKRLLKQWFLKITAYADQLLADLEKLSGWPERVLTMQENWIGQSVGARVVFKTETGEELPVFTTRPDTLWGATFMVLAPEHPLVEKLTTPEQEVAVKAYRAEAAARSEIERSAEDREKTGVWTGSYAINPVNQERIPIWIADYVLMGYGTGAIMAVPAHDQRDFEFARQFGLPIKLVVQPPQGGVTSAEDLQAAWTGEGVLINSGPLNGIPVGKGPGQSVERAIAWLEEQGLGERQVNYRLRDWLISRQRYWGCPIPIIHCPHCGIVPVPEEDLPVLLPEDVELTGRGGSPLAQLEDWVKVKCPACGADARRETDTMDTFICSSWYFLRFSDPRNDREIFRKDLVNAWLPVDQYVGGIEHAILHLLYSRFFTKVLRDLGLLNFDEPFSRLLTQGMVQARTYYNPNKSGKDRWIPTALVKDPNDPRDPETGEPLQVIYATMSKSKGNGVDPEEVLANYGADTARMFILFKAPPEKDLEWDDADVEGQFRFLNRVWRQVYEFVVRGSGTESLQGKAAELLQAKVEAGSLTKAERDLRRAVHTAIKEVSEDLEEYQFNTAIAGLMKLSNALAEAEIPDSPVYAEGIRTLVLLLAPFAPHMAEELWQALGGTDSVHRQAWPTYDPAALVADTVTIVVQVNGKLRGSFEAPADVTPQEQERLALQSEAAQRYLQGMTPKRVIVVPKKLVNLVV</sequence>
<reference key="1">
    <citation type="journal article" date="2007" name="ISME J.">
        <title>Population level functional diversity in a microbial community revealed by comparative genomic and metagenomic analyses.</title>
        <authorList>
            <person name="Bhaya D."/>
            <person name="Grossman A.R."/>
            <person name="Steunou A.-S."/>
            <person name="Khuri N."/>
            <person name="Cohan F.M."/>
            <person name="Hamamura N."/>
            <person name="Melendrez M.C."/>
            <person name="Bateson M.M."/>
            <person name="Ward D.M."/>
            <person name="Heidelberg J.F."/>
        </authorList>
    </citation>
    <scope>NUCLEOTIDE SEQUENCE [LARGE SCALE GENOMIC DNA]</scope>
    <source>
        <strain>JA-3-3Ab</strain>
    </source>
</reference>
<evidence type="ECO:0000255" key="1">
    <source>
        <dbReference type="HAMAP-Rule" id="MF_00049"/>
    </source>
</evidence>
<name>SYL_SYNJA</name>
<organism>
    <name type="scientific">Synechococcus sp. (strain JA-3-3Ab)</name>
    <name type="common">Cyanobacteria bacterium Yellowstone A-Prime</name>
    <dbReference type="NCBI Taxonomy" id="321327"/>
    <lineage>
        <taxon>Bacteria</taxon>
        <taxon>Bacillati</taxon>
        <taxon>Cyanobacteriota</taxon>
        <taxon>Cyanophyceae</taxon>
        <taxon>Synechococcales</taxon>
        <taxon>Synechococcaceae</taxon>
        <taxon>Synechococcus</taxon>
    </lineage>
</organism>
<proteinExistence type="inferred from homology"/>
<dbReference type="EC" id="6.1.1.4" evidence="1"/>
<dbReference type="EMBL" id="CP000239">
    <property type="protein sequence ID" value="ABC99439.1"/>
    <property type="molecule type" value="Genomic_DNA"/>
</dbReference>
<dbReference type="RefSeq" id="WP_011430119.1">
    <property type="nucleotide sequence ID" value="NC_007775.1"/>
</dbReference>
<dbReference type="SMR" id="Q2JV13"/>
<dbReference type="STRING" id="321327.CYA_1256"/>
<dbReference type="KEGG" id="cya:CYA_1256"/>
<dbReference type="eggNOG" id="COG0495">
    <property type="taxonomic scope" value="Bacteria"/>
</dbReference>
<dbReference type="HOGENOM" id="CLU_004427_0_0_3"/>
<dbReference type="OrthoDB" id="9810365at2"/>
<dbReference type="Proteomes" id="UP000008818">
    <property type="component" value="Chromosome"/>
</dbReference>
<dbReference type="GO" id="GO:0005829">
    <property type="term" value="C:cytosol"/>
    <property type="evidence" value="ECO:0007669"/>
    <property type="project" value="TreeGrafter"/>
</dbReference>
<dbReference type="GO" id="GO:0002161">
    <property type="term" value="F:aminoacyl-tRNA deacylase activity"/>
    <property type="evidence" value="ECO:0007669"/>
    <property type="project" value="InterPro"/>
</dbReference>
<dbReference type="GO" id="GO:0005524">
    <property type="term" value="F:ATP binding"/>
    <property type="evidence" value="ECO:0007669"/>
    <property type="project" value="UniProtKB-UniRule"/>
</dbReference>
<dbReference type="GO" id="GO:0004823">
    <property type="term" value="F:leucine-tRNA ligase activity"/>
    <property type="evidence" value="ECO:0007669"/>
    <property type="project" value="UniProtKB-UniRule"/>
</dbReference>
<dbReference type="GO" id="GO:0006429">
    <property type="term" value="P:leucyl-tRNA aminoacylation"/>
    <property type="evidence" value="ECO:0007669"/>
    <property type="project" value="UniProtKB-UniRule"/>
</dbReference>
<dbReference type="CDD" id="cd07958">
    <property type="entry name" value="Anticodon_Ia_Leu_BEm"/>
    <property type="match status" value="1"/>
</dbReference>
<dbReference type="CDD" id="cd00812">
    <property type="entry name" value="LeuRS_core"/>
    <property type="match status" value="1"/>
</dbReference>
<dbReference type="FunFam" id="3.40.50.620:FF:000003">
    <property type="entry name" value="Leucine--tRNA ligase"/>
    <property type="match status" value="1"/>
</dbReference>
<dbReference type="FunFam" id="3.90.740.10:FF:000017">
    <property type="entry name" value="Leucine--tRNA ligase"/>
    <property type="match status" value="1"/>
</dbReference>
<dbReference type="FunFam" id="1.10.730.10:FF:000011">
    <property type="entry name" value="Leucine--tRNA ligase chloroplastic/mitochondrial"/>
    <property type="match status" value="1"/>
</dbReference>
<dbReference type="FunFam" id="3.40.50.620:FF:000100">
    <property type="entry name" value="probable leucine--tRNA ligase, mitochondrial"/>
    <property type="match status" value="1"/>
</dbReference>
<dbReference type="Gene3D" id="2.20.28.290">
    <property type="match status" value="1"/>
</dbReference>
<dbReference type="Gene3D" id="3.10.20.590">
    <property type="match status" value="1"/>
</dbReference>
<dbReference type="Gene3D" id="3.40.50.620">
    <property type="entry name" value="HUPs"/>
    <property type="match status" value="2"/>
</dbReference>
<dbReference type="Gene3D" id="1.10.730.10">
    <property type="entry name" value="Isoleucyl-tRNA Synthetase, Domain 1"/>
    <property type="match status" value="1"/>
</dbReference>
<dbReference type="HAMAP" id="MF_00049_B">
    <property type="entry name" value="Leu_tRNA_synth_B"/>
    <property type="match status" value="1"/>
</dbReference>
<dbReference type="InterPro" id="IPR001412">
    <property type="entry name" value="aa-tRNA-synth_I_CS"/>
</dbReference>
<dbReference type="InterPro" id="IPR002300">
    <property type="entry name" value="aa-tRNA-synth_Ia"/>
</dbReference>
<dbReference type="InterPro" id="IPR002302">
    <property type="entry name" value="Leu-tRNA-ligase"/>
</dbReference>
<dbReference type="InterPro" id="IPR025709">
    <property type="entry name" value="Leu_tRNA-synth_edit"/>
</dbReference>
<dbReference type="InterPro" id="IPR013155">
    <property type="entry name" value="M/V/L/I-tRNA-synth_anticd-bd"/>
</dbReference>
<dbReference type="InterPro" id="IPR015413">
    <property type="entry name" value="Methionyl/Leucyl_tRNA_Synth"/>
</dbReference>
<dbReference type="InterPro" id="IPR014729">
    <property type="entry name" value="Rossmann-like_a/b/a_fold"/>
</dbReference>
<dbReference type="InterPro" id="IPR009080">
    <property type="entry name" value="tRNAsynth_Ia_anticodon-bd"/>
</dbReference>
<dbReference type="InterPro" id="IPR009008">
    <property type="entry name" value="Val/Leu/Ile-tRNA-synth_edit"/>
</dbReference>
<dbReference type="NCBIfam" id="TIGR00396">
    <property type="entry name" value="leuS_bact"/>
    <property type="match status" value="1"/>
</dbReference>
<dbReference type="PANTHER" id="PTHR43740:SF2">
    <property type="entry name" value="LEUCINE--TRNA LIGASE, MITOCHONDRIAL"/>
    <property type="match status" value="1"/>
</dbReference>
<dbReference type="PANTHER" id="PTHR43740">
    <property type="entry name" value="LEUCYL-TRNA SYNTHETASE"/>
    <property type="match status" value="1"/>
</dbReference>
<dbReference type="Pfam" id="PF08264">
    <property type="entry name" value="Anticodon_1"/>
    <property type="match status" value="1"/>
</dbReference>
<dbReference type="Pfam" id="PF00133">
    <property type="entry name" value="tRNA-synt_1"/>
    <property type="match status" value="2"/>
</dbReference>
<dbReference type="Pfam" id="PF13603">
    <property type="entry name" value="tRNA-synt_1_2"/>
    <property type="match status" value="1"/>
</dbReference>
<dbReference type="Pfam" id="PF09334">
    <property type="entry name" value="tRNA-synt_1g"/>
    <property type="match status" value="1"/>
</dbReference>
<dbReference type="PRINTS" id="PR00985">
    <property type="entry name" value="TRNASYNTHLEU"/>
</dbReference>
<dbReference type="SUPFAM" id="SSF47323">
    <property type="entry name" value="Anticodon-binding domain of a subclass of class I aminoacyl-tRNA synthetases"/>
    <property type="match status" value="1"/>
</dbReference>
<dbReference type="SUPFAM" id="SSF52374">
    <property type="entry name" value="Nucleotidylyl transferase"/>
    <property type="match status" value="1"/>
</dbReference>
<dbReference type="SUPFAM" id="SSF50677">
    <property type="entry name" value="ValRS/IleRS/LeuRS editing domain"/>
    <property type="match status" value="1"/>
</dbReference>
<dbReference type="PROSITE" id="PS00178">
    <property type="entry name" value="AA_TRNA_LIGASE_I"/>
    <property type="match status" value="1"/>
</dbReference>
<gene>
    <name evidence="1" type="primary">leuS</name>
    <name type="ordered locus">CYA_1256</name>
</gene>